<keyword id="KW-0093">Biotin biosynthesis</keyword>
<keyword id="KW-0663">Pyridoxal phosphate</keyword>
<keyword id="KW-1185">Reference proteome</keyword>
<keyword id="KW-0808">Transferase</keyword>
<feature type="chain" id="PRO_0000381068" description="8-amino-7-oxononanoate synthase 1">
    <location>
        <begin position="1"/>
        <end position="405"/>
    </location>
</feature>
<feature type="binding site" evidence="1">
    <location>
        <position position="29"/>
    </location>
    <ligand>
        <name>substrate</name>
    </ligand>
</feature>
<feature type="binding site" evidence="1">
    <location>
        <begin position="116"/>
        <end position="117"/>
    </location>
    <ligand>
        <name>pyridoxal 5'-phosphate</name>
        <dbReference type="ChEBI" id="CHEBI:597326"/>
    </ligand>
</feature>
<feature type="binding site" evidence="1">
    <location>
        <position position="141"/>
    </location>
    <ligand>
        <name>substrate</name>
    </ligand>
</feature>
<feature type="binding site" evidence="1">
    <location>
        <position position="187"/>
    </location>
    <ligand>
        <name>pyridoxal 5'-phosphate</name>
        <dbReference type="ChEBI" id="CHEBI:597326"/>
    </ligand>
</feature>
<feature type="binding site" evidence="1">
    <location>
        <position position="215"/>
    </location>
    <ligand>
        <name>pyridoxal 5'-phosphate</name>
        <dbReference type="ChEBI" id="CHEBI:597326"/>
    </ligand>
</feature>
<feature type="binding site" evidence="1">
    <location>
        <position position="247"/>
    </location>
    <ligand>
        <name>pyridoxal 5'-phosphate</name>
        <dbReference type="ChEBI" id="CHEBI:597326"/>
    </ligand>
</feature>
<feature type="binding site" evidence="1">
    <location>
        <position position="368"/>
    </location>
    <ligand>
        <name>substrate</name>
    </ligand>
</feature>
<feature type="modified residue" description="N6-(pyridoxal phosphate)lysine" evidence="1">
    <location>
        <position position="250"/>
    </location>
</feature>
<comment type="function">
    <text evidence="1">Catalyzes the decarboxylative condensation of pimeloyl-[acyl-carrier protein] and L-alanine to produce 8-amino-7-oxononanoate (AON), [acyl-carrier protein], and carbon dioxide.</text>
</comment>
<comment type="catalytic activity">
    <reaction evidence="1">
        <text>6-carboxyhexanoyl-[ACP] + L-alanine + H(+) = (8S)-8-amino-7-oxononanoate + holo-[ACP] + CO2</text>
        <dbReference type="Rhea" id="RHEA:42288"/>
        <dbReference type="Rhea" id="RHEA-COMP:9685"/>
        <dbReference type="Rhea" id="RHEA-COMP:9955"/>
        <dbReference type="ChEBI" id="CHEBI:15378"/>
        <dbReference type="ChEBI" id="CHEBI:16526"/>
        <dbReference type="ChEBI" id="CHEBI:57972"/>
        <dbReference type="ChEBI" id="CHEBI:64479"/>
        <dbReference type="ChEBI" id="CHEBI:78846"/>
        <dbReference type="ChEBI" id="CHEBI:149468"/>
        <dbReference type="EC" id="2.3.1.47"/>
    </reaction>
</comment>
<comment type="cofactor">
    <cofactor evidence="1">
        <name>pyridoxal 5'-phosphate</name>
        <dbReference type="ChEBI" id="CHEBI:597326"/>
    </cofactor>
</comment>
<comment type="pathway">
    <text evidence="1">Cofactor biosynthesis; biotin biosynthesis.</text>
</comment>
<comment type="subunit">
    <text evidence="1">Homodimer.</text>
</comment>
<comment type="similarity">
    <text evidence="1">Belongs to the class-II pyridoxal-phosphate-dependent aminotransferase family. BioF subfamily.</text>
</comment>
<gene>
    <name evidence="1" type="primary">bioF1</name>
    <name type="ordered locus">Bpro_0898</name>
</gene>
<evidence type="ECO:0000255" key="1">
    <source>
        <dbReference type="HAMAP-Rule" id="MF_01693"/>
    </source>
</evidence>
<protein>
    <recommendedName>
        <fullName evidence="1">8-amino-7-oxononanoate synthase 1</fullName>
        <shortName evidence="1">AONS 1</shortName>
        <ecNumber evidence="1">2.3.1.47</ecNumber>
    </recommendedName>
    <alternativeName>
        <fullName evidence="1">7-keto-8-amino-pelargonic acid synthase 1</fullName>
        <shortName evidence="1">7-KAP synthase 1</shortName>
        <shortName evidence="1">KAPA synthase 1</shortName>
    </alternativeName>
    <alternativeName>
        <fullName evidence="1">8-amino-7-ketopelargonate synthase 1</fullName>
    </alternativeName>
</protein>
<sequence>MAINTPLTNSWLDEFPARIAELDRAHLRRRRRVVVPEDGAHLQVDGQRMLAFCSNDYLGLAGHPALVQAACDGARAFGVGAAASPLVSGHSAANEALEAALARFVGQPRALYFYAGYATNIGIVPALVGKGDAIFSDALNHACLIDGARLSSAQIHRYPHADLAALEQELISSPARRKLIISDAVFSMDGDVADVPALLALCERHDALLLLDDAHGFGVLGPQGRGCLAHFGLSGENASPRVLYMATLGKAAGVAGAFVAGSEALVEWLLQKTRSYIFATAAPALLATALQTSLQLIEQDEWRREHLQRLIARLRSGLAQGLQGSSWRLGESPTAIQPVVIGPNDAALAVMEGLRTRGLWVPAIRPPTVAEGTARLRIALSAAHTEADIDRLVQALTELAKPGSL</sequence>
<proteinExistence type="inferred from homology"/>
<name>BIOF1_POLSJ</name>
<reference key="1">
    <citation type="journal article" date="2008" name="Appl. Environ. Microbiol.">
        <title>The genome of Polaromonas sp. strain JS666: insights into the evolution of a hydrocarbon- and xenobiotic-degrading bacterium, and features of relevance to biotechnology.</title>
        <authorList>
            <person name="Mattes T.E."/>
            <person name="Alexander A.K."/>
            <person name="Richardson P.M."/>
            <person name="Munk A.C."/>
            <person name="Han C.S."/>
            <person name="Stothard P."/>
            <person name="Coleman N.V."/>
        </authorList>
    </citation>
    <scope>NUCLEOTIDE SEQUENCE [LARGE SCALE GENOMIC DNA]</scope>
    <source>
        <strain>JS666 / ATCC BAA-500</strain>
    </source>
</reference>
<accession>Q12F38</accession>
<dbReference type="EC" id="2.3.1.47" evidence="1"/>
<dbReference type="EMBL" id="CP000316">
    <property type="protein sequence ID" value="ABE42854.1"/>
    <property type="molecule type" value="Genomic_DNA"/>
</dbReference>
<dbReference type="RefSeq" id="WP_011481856.1">
    <property type="nucleotide sequence ID" value="NC_007948.1"/>
</dbReference>
<dbReference type="SMR" id="Q12F38"/>
<dbReference type="STRING" id="296591.Bpro_0898"/>
<dbReference type="KEGG" id="pol:Bpro_0898"/>
<dbReference type="eggNOG" id="COG0156">
    <property type="taxonomic scope" value="Bacteria"/>
</dbReference>
<dbReference type="HOGENOM" id="CLU_015846_11_2_4"/>
<dbReference type="UniPathway" id="UPA00078"/>
<dbReference type="Proteomes" id="UP000001983">
    <property type="component" value="Chromosome"/>
</dbReference>
<dbReference type="GO" id="GO:0008710">
    <property type="term" value="F:8-amino-7-oxononanoate synthase activity"/>
    <property type="evidence" value="ECO:0007669"/>
    <property type="project" value="UniProtKB-UniRule"/>
</dbReference>
<dbReference type="GO" id="GO:0030170">
    <property type="term" value="F:pyridoxal phosphate binding"/>
    <property type="evidence" value="ECO:0007669"/>
    <property type="project" value="UniProtKB-UniRule"/>
</dbReference>
<dbReference type="GO" id="GO:0009102">
    <property type="term" value="P:biotin biosynthetic process"/>
    <property type="evidence" value="ECO:0007669"/>
    <property type="project" value="UniProtKB-UniRule"/>
</dbReference>
<dbReference type="Gene3D" id="3.90.1150.10">
    <property type="entry name" value="Aspartate Aminotransferase, domain 1"/>
    <property type="match status" value="1"/>
</dbReference>
<dbReference type="Gene3D" id="3.40.640.10">
    <property type="entry name" value="Type I PLP-dependent aspartate aminotransferase-like (Major domain)"/>
    <property type="match status" value="1"/>
</dbReference>
<dbReference type="HAMAP" id="MF_01693">
    <property type="entry name" value="BioF_aminotrans_2"/>
    <property type="match status" value="1"/>
</dbReference>
<dbReference type="InterPro" id="IPR004839">
    <property type="entry name" value="Aminotransferase_I/II_large"/>
</dbReference>
<dbReference type="InterPro" id="IPR050087">
    <property type="entry name" value="AON_synthase_class-II"/>
</dbReference>
<dbReference type="InterPro" id="IPR004723">
    <property type="entry name" value="AONS_Archaea/Proteobacteria"/>
</dbReference>
<dbReference type="InterPro" id="IPR022834">
    <property type="entry name" value="AONS_Proteobacteria"/>
</dbReference>
<dbReference type="InterPro" id="IPR015424">
    <property type="entry name" value="PyrdxlP-dep_Trfase"/>
</dbReference>
<dbReference type="InterPro" id="IPR015421">
    <property type="entry name" value="PyrdxlP-dep_Trfase_major"/>
</dbReference>
<dbReference type="InterPro" id="IPR015422">
    <property type="entry name" value="PyrdxlP-dep_Trfase_small"/>
</dbReference>
<dbReference type="NCBIfam" id="TIGR00858">
    <property type="entry name" value="bioF"/>
    <property type="match status" value="1"/>
</dbReference>
<dbReference type="PANTHER" id="PTHR13693:SF100">
    <property type="entry name" value="8-AMINO-7-OXONONANOATE SYNTHASE"/>
    <property type="match status" value="1"/>
</dbReference>
<dbReference type="PANTHER" id="PTHR13693">
    <property type="entry name" value="CLASS II AMINOTRANSFERASE/8-AMINO-7-OXONONANOATE SYNTHASE"/>
    <property type="match status" value="1"/>
</dbReference>
<dbReference type="Pfam" id="PF00155">
    <property type="entry name" value="Aminotran_1_2"/>
    <property type="match status" value="1"/>
</dbReference>
<dbReference type="SUPFAM" id="SSF53383">
    <property type="entry name" value="PLP-dependent transferases"/>
    <property type="match status" value="1"/>
</dbReference>
<organism>
    <name type="scientific">Polaromonas sp. (strain JS666 / ATCC BAA-500)</name>
    <dbReference type="NCBI Taxonomy" id="296591"/>
    <lineage>
        <taxon>Bacteria</taxon>
        <taxon>Pseudomonadati</taxon>
        <taxon>Pseudomonadota</taxon>
        <taxon>Betaproteobacteria</taxon>
        <taxon>Burkholderiales</taxon>
        <taxon>Comamonadaceae</taxon>
        <taxon>Polaromonas</taxon>
    </lineage>
</organism>